<feature type="chain" id="PRO_1000128529" description="Small ribosomal subunit protein uS14">
    <location>
        <begin position="1"/>
        <end position="101"/>
    </location>
</feature>
<sequence length="101" mass="11634">MAKLALIEREKKRAKLAAKFAPKRAALKAIIDDQEKSEEERYMARLELQQLPRNANPTRQRNRCAITGRPRGTFRKFGLARNKIREIAFKGEIPGLTKASW</sequence>
<reference key="1">
    <citation type="journal article" date="2010" name="PLoS ONE">
        <title>The complete multipartite genome sequence of Cupriavidus necator JMP134, a versatile pollutant degrader.</title>
        <authorList>
            <person name="Lykidis A."/>
            <person name="Perez-Pantoja D."/>
            <person name="Ledger T."/>
            <person name="Mavromatis K."/>
            <person name="Anderson I.J."/>
            <person name="Ivanova N.N."/>
            <person name="Hooper S.D."/>
            <person name="Lapidus A."/>
            <person name="Lucas S."/>
            <person name="Gonzalez B."/>
            <person name="Kyrpides N.C."/>
        </authorList>
    </citation>
    <scope>NUCLEOTIDE SEQUENCE [LARGE SCALE GENOMIC DNA]</scope>
    <source>
        <strain>JMP134 / LMG 1197</strain>
    </source>
</reference>
<protein>
    <recommendedName>
        <fullName evidence="1">Small ribosomal subunit protein uS14</fullName>
    </recommendedName>
    <alternativeName>
        <fullName evidence="2">30S ribosomal protein S14</fullName>
    </alternativeName>
</protein>
<name>RS14_CUPPJ</name>
<dbReference type="EMBL" id="CP000090">
    <property type="protein sequence ID" value="AAZ62526.1"/>
    <property type="molecule type" value="Genomic_DNA"/>
</dbReference>
<dbReference type="SMR" id="Q46WF7"/>
<dbReference type="STRING" id="264198.Reut_A3166"/>
<dbReference type="KEGG" id="reu:Reut_A3166"/>
<dbReference type="eggNOG" id="COG0199">
    <property type="taxonomic scope" value="Bacteria"/>
</dbReference>
<dbReference type="HOGENOM" id="CLU_139869_0_1_4"/>
<dbReference type="OrthoDB" id="9810484at2"/>
<dbReference type="GO" id="GO:0005737">
    <property type="term" value="C:cytoplasm"/>
    <property type="evidence" value="ECO:0007669"/>
    <property type="project" value="UniProtKB-ARBA"/>
</dbReference>
<dbReference type="GO" id="GO:0015935">
    <property type="term" value="C:small ribosomal subunit"/>
    <property type="evidence" value="ECO:0007669"/>
    <property type="project" value="TreeGrafter"/>
</dbReference>
<dbReference type="GO" id="GO:0019843">
    <property type="term" value="F:rRNA binding"/>
    <property type="evidence" value="ECO:0007669"/>
    <property type="project" value="UniProtKB-UniRule"/>
</dbReference>
<dbReference type="GO" id="GO:0003735">
    <property type="term" value="F:structural constituent of ribosome"/>
    <property type="evidence" value="ECO:0007669"/>
    <property type="project" value="InterPro"/>
</dbReference>
<dbReference type="GO" id="GO:0006412">
    <property type="term" value="P:translation"/>
    <property type="evidence" value="ECO:0007669"/>
    <property type="project" value="UniProtKB-UniRule"/>
</dbReference>
<dbReference type="FunFam" id="1.10.287.1480:FF:000001">
    <property type="entry name" value="30S ribosomal protein S14"/>
    <property type="match status" value="1"/>
</dbReference>
<dbReference type="Gene3D" id="1.10.287.1480">
    <property type="match status" value="1"/>
</dbReference>
<dbReference type="HAMAP" id="MF_00537">
    <property type="entry name" value="Ribosomal_uS14_1"/>
    <property type="match status" value="1"/>
</dbReference>
<dbReference type="InterPro" id="IPR001209">
    <property type="entry name" value="Ribosomal_uS14"/>
</dbReference>
<dbReference type="InterPro" id="IPR023036">
    <property type="entry name" value="Ribosomal_uS14_bac/plastid"/>
</dbReference>
<dbReference type="NCBIfam" id="NF006477">
    <property type="entry name" value="PRK08881.1"/>
    <property type="match status" value="1"/>
</dbReference>
<dbReference type="PANTHER" id="PTHR19836">
    <property type="entry name" value="30S RIBOSOMAL PROTEIN S14"/>
    <property type="match status" value="1"/>
</dbReference>
<dbReference type="PANTHER" id="PTHR19836:SF19">
    <property type="entry name" value="SMALL RIBOSOMAL SUBUNIT PROTEIN US14M"/>
    <property type="match status" value="1"/>
</dbReference>
<dbReference type="Pfam" id="PF00253">
    <property type="entry name" value="Ribosomal_S14"/>
    <property type="match status" value="1"/>
</dbReference>
<dbReference type="SUPFAM" id="SSF57716">
    <property type="entry name" value="Glucocorticoid receptor-like (DNA-binding domain)"/>
    <property type="match status" value="1"/>
</dbReference>
<evidence type="ECO:0000255" key="1">
    <source>
        <dbReference type="HAMAP-Rule" id="MF_00537"/>
    </source>
</evidence>
<evidence type="ECO:0000305" key="2"/>
<proteinExistence type="inferred from homology"/>
<organism>
    <name type="scientific">Cupriavidus pinatubonensis (strain JMP 134 / LMG 1197)</name>
    <name type="common">Cupriavidus necator (strain JMP 134)</name>
    <dbReference type="NCBI Taxonomy" id="264198"/>
    <lineage>
        <taxon>Bacteria</taxon>
        <taxon>Pseudomonadati</taxon>
        <taxon>Pseudomonadota</taxon>
        <taxon>Betaproteobacteria</taxon>
        <taxon>Burkholderiales</taxon>
        <taxon>Burkholderiaceae</taxon>
        <taxon>Cupriavidus</taxon>
    </lineage>
</organism>
<accession>Q46WF7</accession>
<keyword id="KW-0687">Ribonucleoprotein</keyword>
<keyword id="KW-0689">Ribosomal protein</keyword>
<keyword id="KW-0694">RNA-binding</keyword>
<keyword id="KW-0699">rRNA-binding</keyword>
<comment type="function">
    <text evidence="1">Binds 16S rRNA, required for the assembly of 30S particles and may also be responsible for determining the conformation of the 16S rRNA at the A site.</text>
</comment>
<comment type="subunit">
    <text evidence="1">Part of the 30S ribosomal subunit. Contacts proteins S3 and S10.</text>
</comment>
<comment type="similarity">
    <text evidence="1">Belongs to the universal ribosomal protein uS14 family.</text>
</comment>
<gene>
    <name evidence="1" type="primary">rpsN</name>
    <name type="ordered locus">Reut_A3166</name>
</gene>